<reference key="1">
    <citation type="journal article" date="2009" name="Nature">
        <title>Evolution of pathogenicity and sexual reproduction in eight Candida genomes.</title>
        <authorList>
            <person name="Butler G."/>
            <person name="Rasmussen M.D."/>
            <person name="Lin M.F."/>
            <person name="Santos M.A.S."/>
            <person name="Sakthikumar S."/>
            <person name="Munro C.A."/>
            <person name="Rheinbay E."/>
            <person name="Grabherr M."/>
            <person name="Forche A."/>
            <person name="Reedy J.L."/>
            <person name="Agrafioti I."/>
            <person name="Arnaud M.B."/>
            <person name="Bates S."/>
            <person name="Brown A.J.P."/>
            <person name="Brunke S."/>
            <person name="Costanzo M.C."/>
            <person name="Fitzpatrick D.A."/>
            <person name="de Groot P.W.J."/>
            <person name="Harris D."/>
            <person name="Hoyer L.L."/>
            <person name="Hube B."/>
            <person name="Klis F.M."/>
            <person name="Kodira C."/>
            <person name="Lennard N."/>
            <person name="Logue M.E."/>
            <person name="Martin R."/>
            <person name="Neiman A.M."/>
            <person name="Nikolaou E."/>
            <person name="Quail M.A."/>
            <person name="Quinn J."/>
            <person name="Santos M.C."/>
            <person name="Schmitzberger F.F."/>
            <person name="Sherlock G."/>
            <person name="Shah P."/>
            <person name="Silverstein K.A.T."/>
            <person name="Skrzypek M.S."/>
            <person name="Soll D."/>
            <person name="Staggs R."/>
            <person name="Stansfield I."/>
            <person name="Stumpf M.P.H."/>
            <person name="Sudbery P.E."/>
            <person name="Srikantha T."/>
            <person name="Zeng Q."/>
            <person name="Berman J."/>
            <person name="Berriman M."/>
            <person name="Heitman J."/>
            <person name="Gow N.A.R."/>
            <person name="Lorenz M.C."/>
            <person name="Birren B.W."/>
            <person name="Kellis M."/>
            <person name="Cuomo C.A."/>
        </authorList>
    </citation>
    <scope>NUCLEOTIDE SEQUENCE [LARGE SCALE GENOMIC DNA]</scope>
    <source>
        <strain>ATCC 6260 / CBS 566 / DSM 6381 / JCM 1539 / NBRC 10279 / NRRL Y-324</strain>
    </source>
</reference>
<keyword id="KW-0963">Cytoplasm</keyword>
<keyword id="KW-0507">mRNA processing</keyword>
<keyword id="KW-0509">mRNA transport</keyword>
<keyword id="KW-0539">Nucleus</keyword>
<keyword id="KW-1185">Reference proteome</keyword>
<keyword id="KW-0677">Repeat</keyword>
<keyword id="KW-0694">RNA-binding</keyword>
<keyword id="KW-0810">Translation regulation</keyword>
<keyword id="KW-0813">Transport</keyword>
<evidence type="ECO:0000250" key="1"/>
<evidence type="ECO:0000255" key="2">
    <source>
        <dbReference type="PROSITE-ProRule" id="PRU00176"/>
    </source>
</evidence>
<evidence type="ECO:0000255" key="3">
    <source>
        <dbReference type="PROSITE-ProRule" id="PRU00641"/>
    </source>
</evidence>
<evidence type="ECO:0000256" key="4">
    <source>
        <dbReference type="SAM" id="MobiDB-lite"/>
    </source>
</evidence>
<evidence type="ECO:0000305" key="5"/>
<sequence length="631" mass="69928">MSDLQESLEKLSINEKAPQAPADDATPSNTTTLEKESSESAAAAAGEGAGEEGEEASASLYVGELNPSVNEALLFEIFSPIGQVSSIRVCRDAVTKKSLGYAYVNFHKHADGSRAIEELNYSLVDGRPCRIMWSQRDPSLRRNGDGNIFIKNLHPAIDNKALHDTFSAFGRILSCKVATDELGQSKCFGFVHYETAEAAEAAIENVNGMLLNDREVFVGKHVSKRDRESKFEEMKANFTNVYVKNLAPEVDNAKFEEIFKPFGPVTSVHLETDQEGKSRGFGFVNFENHESALNAVKEMNDKEIDGQKLYVGRAQKKRERLDELKRLYESTRLEKLSKYQGVNLFVKNLDDSIDSEKLEEEFKPFGTITSARVMVDDAGKSKGFGFVCFSSPEEATKAITEMNQRMIQGKPLYVALAQRKDVRRSQLEQQIQARNQMRMQNAAAAAGMPGQFMSPMFYGQQPGFFPPNGRGGAQGPFPPNPQMMMPRGGQMPPPQGQWPRAGPNGQPVPVYGMPPVYGGEFNGPNGQRQQRGAYPPNRNQKGGRPQRDLAAIISTVPVDQQKRILGEELYPKIVATGKAQEPEAAGKITGMMLDLENEEILALLEDDELFENHFEDALTAFEEYKKGEQAE</sequence>
<accession>A5DM21</accession>
<comment type="function">
    <text evidence="1">Binds the poly(A) tail of mRNA. Appears to be an important mediator of the multiple roles of the poly(A) tail in mRNA biogenesis, stability and translation. In the nucleus, involved in both mRNA cleavage and polyadenylation. Is also required for efficient mRNA export to the cytoplasm. Acts in concert with a poly(A)-specific nuclease (PAN) to affect poly(A) tail shortening, which may occur concomitantly with either nucleocytoplasmic mRNA transport or translational initiation. In the cytoplasm, stimulates translation initiation and regulates mRNA decay through translation termination-coupled poly(A) shortening, probably mediated by PAN (By similarity).</text>
</comment>
<comment type="subcellular location">
    <subcellularLocation>
        <location evidence="1">Cytoplasm</location>
    </subcellularLocation>
    <subcellularLocation>
        <location evidence="1">Nucleus</location>
    </subcellularLocation>
</comment>
<comment type="similarity">
    <text evidence="5">Belongs to the polyadenylate-binding protein type-1 family.</text>
</comment>
<feature type="chain" id="PRO_0000295398" description="Polyadenylate-binding protein, cytoplasmic and nuclear">
    <location>
        <begin position="1"/>
        <end position="631"/>
    </location>
</feature>
<feature type="domain" description="RRM 1" evidence="2">
    <location>
        <begin position="58"/>
        <end position="136"/>
    </location>
</feature>
<feature type="domain" description="RRM 2" evidence="2">
    <location>
        <begin position="146"/>
        <end position="223"/>
    </location>
</feature>
<feature type="domain" description="RRM 3" evidence="2">
    <location>
        <begin position="239"/>
        <end position="316"/>
    </location>
</feature>
<feature type="domain" description="RRM 4" evidence="2">
    <location>
        <begin position="342"/>
        <end position="419"/>
    </location>
</feature>
<feature type="domain" description="PABC" evidence="3">
    <location>
        <begin position="545"/>
        <end position="626"/>
    </location>
</feature>
<feature type="region of interest" description="Disordered" evidence="4">
    <location>
        <begin position="1"/>
        <end position="56"/>
    </location>
</feature>
<feature type="region of interest" description="Disordered" evidence="4">
    <location>
        <begin position="518"/>
        <end position="545"/>
    </location>
</feature>
<gene>
    <name type="primary">PAB1</name>
    <name type="ORF">PGUG_04322</name>
</gene>
<dbReference type="EMBL" id="CH408159">
    <property type="protein sequence ID" value="EDK40224.2"/>
    <property type="molecule type" value="Genomic_DNA"/>
</dbReference>
<dbReference type="RefSeq" id="XP_001483593.1">
    <property type="nucleotide sequence ID" value="XM_001483543.1"/>
</dbReference>
<dbReference type="SMR" id="A5DM21"/>
<dbReference type="FunCoup" id="A5DM21">
    <property type="interactions" value="1373"/>
</dbReference>
<dbReference type="STRING" id="294746.A5DM21"/>
<dbReference type="GeneID" id="5125666"/>
<dbReference type="KEGG" id="pgu:PGUG_04322"/>
<dbReference type="VEuPathDB" id="FungiDB:PGUG_04322"/>
<dbReference type="eggNOG" id="KOG0123">
    <property type="taxonomic scope" value="Eukaryota"/>
</dbReference>
<dbReference type="HOGENOM" id="CLU_012062_22_4_1"/>
<dbReference type="InParanoid" id="A5DM21"/>
<dbReference type="OMA" id="QQPGFMP"/>
<dbReference type="OrthoDB" id="19742at2759"/>
<dbReference type="Proteomes" id="UP000001997">
    <property type="component" value="Unassembled WGS sequence"/>
</dbReference>
<dbReference type="GO" id="GO:0010494">
    <property type="term" value="C:cytoplasmic stress granule"/>
    <property type="evidence" value="ECO:0007669"/>
    <property type="project" value="EnsemblFungi"/>
</dbReference>
<dbReference type="GO" id="GO:0071014">
    <property type="term" value="C:post-mRNA release spliceosomal complex"/>
    <property type="evidence" value="ECO:0007669"/>
    <property type="project" value="EnsemblFungi"/>
</dbReference>
<dbReference type="GO" id="GO:0005840">
    <property type="term" value="C:ribosome"/>
    <property type="evidence" value="ECO:0007669"/>
    <property type="project" value="EnsemblFungi"/>
</dbReference>
<dbReference type="GO" id="GO:0140693">
    <property type="term" value="F:molecular condensate scaffold activity"/>
    <property type="evidence" value="ECO:0007669"/>
    <property type="project" value="EnsemblFungi"/>
</dbReference>
<dbReference type="GO" id="GO:0008143">
    <property type="term" value="F:poly(A) binding"/>
    <property type="evidence" value="ECO:0007669"/>
    <property type="project" value="EnsemblFungi"/>
</dbReference>
<dbReference type="GO" id="GO:1990841">
    <property type="term" value="F:promoter-specific chromatin binding"/>
    <property type="evidence" value="ECO:0007669"/>
    <property type="project" value="EnsemblFungi"/>
</dbReference>
<dbReference type="GO" id="GO:0008428">
    <property type="term" value="F:ribonuclease inhibitor activity"/>
    <property type="evidence" value="ECO:0007669"/>
    <property type="project" value="EnsemblFungi"/>
</dbReference>
<dbReference type="GO" id="GO:0031124">
    <property type="term" value="P:mRNA 3'-end processing"/>
    <property type="evidence" value="ECO:0007669"/>
    <property type="project" value="EnsemblFungi"/>
</dbReference>
<dbReference type="GO" id="GO:0051028">
    <property type="term" value="P:mRNA transport"/>
    <property type="evidence" value="ECO:0007669"/>
    <property type="project" value="UniProtKB-KW"/>
</dbReference>
<dbReference type="GO" id="GO:0000289">
    <property type="term" value="P:nuclear-transcribed mRNA poly(A) tail shortening"/>
    <property type="evidence" value="ECO:0007669"/>
    <property type="project" value="EnsemblFungi"/>
</dbReference>
<dbReference type="GO" id="GO:0060211">
    <property type="term" value="P:regulation of nuclear-transcribed mRNA poly(A) tail shortening"/>
    <property type="evidence" value="ECO:0007669"/>
    <property type="project" value="EnsemblFungi"/>
</dbReference>
<dbReference type="GO" id="GO:0006446">
    <property type="term" value="P:regulation of translational initiation"/>
    <property type="evidence" value="ECO:0007669"/>
    <property type="project" value="EnsemblFungi"/>
</dbReference>
<dbReference type="CDD" id="cd12378">
    <property type="entry name" value="RRM1_I_PABPs"/>
    <property type="match status" value="1"/>
</dbReference>
<dbReference type="CDD" id="cd12379">
    <property type="entry name" value="RRM2_I_PABPs"/>
    <property type="match status" value="1"/>
</dbReference>
<dbReference type="CDD" id="cd12380">
    <property type="entry name" value="RRM3_I_PABPs"/>
    <property type="match status" value="1"/>
</dbReference>
<dbReference type="CDD" id="cd12381">
    <property type="entry name" value="RRM4_I_PABPs"/>
    <property type="match status" value="1"/>
</dbReference>
<dbReference type="FunFam" id="1.10.1900.10:FF:000008">
    <property type="entry name" value="Polyadenylate-binding protein"/>
    <property type="match status" value="1"/>
</dbReference>
<dbReference type="FunFam" id="3.30.70.330:FF:000003">
    <property type="entry name" value="Polyadenylate-binding protein"/>
    <property type="match status" value="1"/>
</dbReference>
<dbReference type="FunFam" id="3.30.70.330:FF:000441">
    <property type="entry name" value="Polyadenylate-binding protein"/>
    <property type="match status" value="1"/>
</dbReference>
<dbReference type="FunFam" id="3.30.70.330:FF:000520">
    <property type="entry name" value="Polyadenylate-binding protein"/>
    <property type="match status" value="1"/>
</dbReference>
<dbReference type="FunFam" id="3.30.70.330:FF:000648">
    <property type="entry name" value="Polyadenylate-binding protein"/>
    <property type="match status" value="1"/>
</dbReference>
<dbReference type="Gene3D" id="3.30.70.330">
    <property type="match status" value="4"/>
</dbReference>
<dbReference type="Gene3D" id="1.10.1900.10">
    <property type="entry name" value="c-terminal domain of poly(a) binding protein"/>
    <property type="match status" value="1"/>
</dbReference>
<dbReference type="InterPro" id="IPR012677">
    <property type="entry name" value="Nucleotide-bd_a/b_plait_sf"/>
</dbReference>
<dbReference type="InterPro" id="IPR036053">
    <property type="entry name" value="PABP-dom"/>
</dbReference>
<dbReference type="InterPro" id="IPR006515">
    <property type="entry name" value="PABP_1234"/>
</dbReference>
<dbReference type="InterPro" id="IPR002004">
    <property type="entry name" value="PABP_HYD_C"/>
</dbReference>
<dbReference type="InterPro" id="IPR034364">
    <property type="entry name" value="PABP_RRM1"/>
</dbReference>
<dbReference type="InterPro" id="IPR035979">
    <property type="entry name" value="RBD_domain_sf"/>
</dbReference>
<dbReference type="InterPro" id="IPR045305">
    <property type="entry name" value="RRM2_I_PABPs"/>
</dbReference>
<dbReference type="InterPro" id="IPR000504">
    <property type="entry name" value="RRM_dom"/>
</dbReference>
<dbReference type="InterPro" id="IPR003954">
    <property type="entry name" value="RRM_dom_euk"/>
</dbReference>
<dbReference type="NCBIfam" id="TIGR01628">
    <property type="entry name" value="PABP-1234"/>
    <property type="match status" value="1"/>
</dbReference>
<dbReference type="PANTHER" id="PTHR24012">
    <property type="entry name" value="RNA BINDING PROTEIN"/>
    <property type="match status" value="1"/>
</dbReference>
<dbReference type="Pfam" id="PF00658">
    <property type="entry name" value="MLLE"/>
    <property type="match status" value="1"/>
</dbReference>
<dbReference type="Pfam" id="PF00076">
    <property type="entry name" value="RRM_1"/>
    <property type="match status" value="4"/>
</dbReference>
<dbReference type="SMART" id="SM00517">
    <property type="entry name" value="PolyA"/>
    <property type="match status" value="1"/>
</dbReference>
<dbReference type="SMART" id="SM00360">
    <property type="entry name" value="RRM"/>
    <property type="match status" value="4"/>
</dbReference>
<dbReference type="SMART" id="SM00361">
    <property type="entry name" value="RRM_1"/>
    <property type="match status" value="4"/>
</dbReference>
<dbReference type="SUPFAM" id="SSF63570">
    <property type="entry name" value="PABC (PABP) domain"/>
    <property type="match status" value="1"/>
</dbReference>
<dbReference type="SUPFAM" id="SSF54928">
    <property type="entry name" value="RNA-binding domain, RBD"/>
    <property type="match status" value="2"/>
</dbReference>
<dbReference type="PROSITE" id="PS51309">
    <property type="entry name" value="PABC"/>
    <property type="match status" value="1"/>
</dbReference>
<dbReference type="PROSITE" id="PS50102">
    <property type="entry name" value="RRM"/>
    <property type="match status" value="4"/>
</dbReference>
<name>PABP_PICGU</name>
<proteinExistence type="inferred from homology"/>
<protein>
    <recommendedName>
        <fullName>Polyadenylate-binding protein, cytoplasmic and nuclear</fullName>
        <shortName>PABP</shortName>
        <shortName>Poly(A)-binding protein</shortName>
    </recommendedName>
    <alternativeName>
        <fullName>Polyadenylate tail-binding protein</fullName>
    </alternativeName>
</protein>
<organism>
    <name type="scientific">Meyerozyma guilliermondii (strain ATCC 6260 / CBS 566 / DSM 6381 / JCM 1539 / NBRC 10279 / NRRL Y-324)</name>
    <name type="common">Yeast</name>
    <name type="synonym">Candida guilliermondii</name>
    <dbReference type="NCBI Taxonomy" id="294746"/>
    <lineage>
        <taxon>Eukaryota</taxon>
        <taxon>Fungi</taxon>
        <taxon>Dikarya</taxon>
        <taxon>Ascomycota</taxon>
        <taxon>Saccharomycotina</taxon>
        <taxon>Pichiomycetes</taxon>
        <taxon>Debaryomycetaceae</taxon>
        <taxon>Meyerozyma</taxon>
    </lineage>
</organism>